<proteinExistence type="inferred from homology"/>
<sequence length="341" mass="38673">MKLEDFDFELPEDRIAQHPVEPRDSSRLMVMNRWTGEIEHRVFRELPELLQAGDVLVVNNTRVIPARLIGEKEGTQAKIECLLLTRRDKDVWETLIKPGKRLKAGQTVVFGDGLLRGELLEILPDGNRLVRFNYQGIFEEVLDQLGNMPLPPYITEQLQDKERYQTIYAKESGSAAAPTAGLHFTPELLERLQDKGVEIVEILLHVGLGTFRPVKVENVEEHTMHSEYYRVTPDAAERINRAKSQGRRVIAVGTTASRTLESVAGENGRIEGKEGWTDIYIYPGYTFKILDGLITNFHFPKSTLVMLVSALAGRDQILKAYQIAIAEGYRFYSFGDAMMIL</sequence>
<reference key="1">
    <citation type="journal article" date="2012" name="BMC Microbiol.">
        <title>Genome sequence of Desulfitobacterium hafniense DCB-2, a Gram-positive anaerobe capable of dehalogenation and metal reduction.</title>
        <authorList>
            <person name="Kim S.H."/>
            <person name="Harzman C."/>
            <person name="Davis J.K."/>
            <person name="Hutcheson R."/>
            <person name="Broderick J.B."/>
            <person name="Marsh T.L."/>
            <person name="Tiedje J.M."/>
        </authorList>
    </citation>
    <scope>NUCLEOTIDE SEQUENCE [LARGE SCALE GENOMIC DNA]</scope>
    <source>
        <strain>DSM 10664 / DCB-2</strain>
    </source>
</reference>
<organism>
    <name type="scientific">Desulfitobacterium hafniense (strain DSM 10664 / DCB-2)</name>
    <dbReference type="NCBI Taxonomy" id="272564"/>
    <lineage>
        <taxon>Bacteria</taxon>
        <taxon>Bacillati</taxon>
        <taxon>Bacillota</taxon>
        <taxon>Clostridia</taxon>
        <taxon>Eubacteriales</taxon>
        <taxon>Desulfitobacteriaceae</taxon>
        <taxon>Desulfitobacterium</taxon>
    </lineage>
</organism>
<protein>
    <recommendedName>
        <fullName evidence="1">S-adenosylmethionine:tRNA ribosyltransferase-isomerase</fullName>
        <ecNumber evidence="1">2.4.99.17</ecNumber>
    </recommendedName>
    <alternativeName>
        <fullName evidence="1">Queuosine biosynthesis protein QueA</fullName>
    </alternativeName>
</protein>
<gene>
    <name evidence="1" type="primary">queA</name>
    <name type="ordered locus">Dhaf_3623</name>
</gene>
<name>QUEA_DESHD</name>
<dbReference type="EC" id="2.4.99.17" evidence="1"/>
<dbReference type="EMBL" id="CP001336">
    <property type="protein sequence ID" value="ACL21640.1"/>
    <property type="molecule type" value="Genomic_DNA"/>
</dbReference>
<dbReference type="RefSeq" id="WP_011460358.1">
    <property type="nucleotide sequence ID" value="NC_011830.1"/>
</dbReference>
<dbReference type="SMR" id="B8FQV3"/>
<dbReference type="KEGG" id="dhd:Dhaf_3623"/>
<dbReference type="HOGENOM" id="CLU_039110_1_0_9"/>
<dbReference type="UniPathway" id="UPA00392"/>
<dbReference type="Proteomes" id="UP000007726">
    <property type="component" value="Chromosome"/>
</dbReference>
<dbReference type="GO" id="GO:0005737">
    <property type="term" value="C:cytoplasm"/>
    <property type="evidence" value="ECO:0007669"/>
    <property type="project" value="UniProtKB-SubCell"/>
</dbReference>
<dbReference type="GO" id="GO:0051075">
    <property type="term" value="F:S-adenosylmethionine:tRNA ribosyltransferase-isomerase activity"/>
    <property type="evidence" value="ECO:0007669"/>
    <property type="project" value="UniProtKB-EC"/>
</dbReference>
<dbReference type="GO" id="GO:0008616">
    <property type="term" value="P:queuosine biosynthetic process"/>
    <property type="evidence" value="ECO:0007669"/>
    <property type="project" value="UniProtKB-UniRule"/>
</dbReference>
<dbReference type="GO" id="GO:0002099">
    <property type="term" value="P:tRNA wobble guanine modification"/>
    <property type="evidence" value="ECO:0007669"/>
    <property type="project" value="TreeGrafter"/>
</dbReference>
<dbReference type="FunFam" id="2.40.10.240:FF:000002">
    <property type="entry name" value="S-adenosylmethionine:tRNA ribosyltransferase-isomerase"/>
    <property type="match status" value="1"/>
</dbReference>
<dbReference type="FunFam" id="3.40.1780.10:FF:000001">
    <property type="entry name" value="S-adenosylmethionine:tRNA ribosyltransferase-isomerase"/>
    <property type="match status" value="1"/>
</dbReference>
<dbReference type="Gene3D" id="2.40.10.240">
    <property type="entry name" value="QueA-like"/>
    <property type="match status" value="1"/>
</dbReference>
<dbReference type="Gene3D" id="3.40.1780.10">
    <property type="entry name" value="QueA-like"/>
    <property type="match status" value="1"/>
</dbReference>
<dbReference type="HAMAP" id="MF_00113">
    <property type="entry name" value="QueA"/>
    <property type="match status" value="1"/>
</dbReference>
<dbReference type="InterPro" id="IPR003699">
    <property type="entry name" value="QueA"/>
</dbReference>
<dbReference type="InterPro" id="IPR042118">
    <property type="entry name" value="QueA_dom1"/>
</dbReference>
<dbReference type="InterPro" id="IPR042119">
    <property type="entry name" value="QueA_dom2"/>
</dbReference>
<dbReference type="InterPro" id="IPR036100">
    <property type="entry name" value="QueA_sf"/>
</dbReference>
<dbReference type="NCBIfam" id="NF001140">
    <property type="entry name" value="PRK00147.1"/>
    <property type="match status" value="1"/>
</dbReference>
<dbReference type="NCBIfam" id="TIGR00113">
    <property type="entry name" value="queA"/>
    <property type="match status" value="1"/>
</dbReference>
<dbReference type="PANTHER" id="PTHR30307">
    <property type="entry name" value="S-ADENOSYLMETHIONINE:TRNA RIBOSYLTRANSFERASE-ISOMERASE"/>
    <property type="match status" value="1"/>
</dbReference>
<dbReference type="PANTHER" id="PTHR30307:SF0">
    <property type="entry name" value="S-ADENOSYLMETHIONINE:TRNA RIBOSYLTRANSFERASE-ISOMERASE"/>
    <property type="match status" value="1"/>
</dbReference>
<dbReference type="Pfam" id="PF02547">
    <property type="entry name" value="Queuosine_synth"/>
    <property type="match status" value="1"/>
</dbReference>
<dbReference type="SUPFAM" id="SSF111337">
    <property type="entry name" value="QueA-like"/>
    <property type="match status" value="1"/>
</dbReference>
<comment type="function">
    <text evidence="1">Transfers and isomerizes the ribose moiety from AdoMet to the 7-aminomethyl group of 7-deazaguanine (preQ1-tRNA) to give epoxyqueuosine (oQ-tRNA).</text>
</comment>
<comment type="catalytic activity">
    <reaction evidence="1">
        <text>7-aminomethyl-7-carbaguanosine(34) in tRNA + S-adenosyl-L-methionine = epoxyqueuosine(34) in tRNA + adenine + L-methionine + 2 H(+)</text>
        <dbReference type="Rhea" id="RHEA:32155"/>
        <dbReference type="Rhea" id="RHEA-COMP:10342"/>
        <dbReference type="Rhea" id="RHEA-COMP:18582"/>
        <dbReference type="ChEBI" id="CHEBI:15378"/>
        <dbReference type="ChEBI" id="CHEBI:16708"/>
        <dbReference type="ChEBI" id="CHEBI:57844"/>
        <dbReference type="ChEBI" id="CHEBI:59789"/>
        <dbReference type="ChEBI" id="CHEBI:82833"/>
        <dbReference type="ChEBI" id="CHEBI:194443"/>
        <dbReference type="EC" id="2.4.99.17"/>
    </reaction>
</comment>
<comment type="pathway">
    <text evidence="1">tRNA modification; tRNA-queuosine biosynthesis.</text>
</comment>
<comment type="subunit">
    <text evidence="1">Monomer.</text>
</comment>
<comment type="subcellular location">
    <subcellularLocation>
        <location evidence="1">Cytoplasm</location>
    </subcellularLocation>
</comment>
<comment type="similarity">
    <text evidence="1">Belongs to the QueA family.</text>
</comment>
<keyword id="KW-0963">Cytoplasm</keyword>
<keyword id="KW-0671">Queuosine biosynthesis</keyword>
<keyword id="KW-0949">S-adenosyl-L-methionine</keyword>
<keyword id="KW-0808">Transferase</keyword>
<evidence type="ECO:0000255" key="1">
    <source>
        <dbReference type="HAMAP-Rule" id="MF_00113"/>
    </source>
</evidence>
<accession>B8FQV3</accession>
<feature type="chain" id="PRO_1000119150" description="S-adenosylmethionine:tRNA ribosyltransferase-isomerase">
    <location>
        <begin position="1"/>
        <end position="341"/>
    </location>
</feature>